<evidence type="ECO:0000250" key="1"/>
<evidence type="ECO:0000250" key="2">
    <source>
        <dbReference type="UniProtKB" id="Q0NZX5"/>
    </source>
</evidence>
<evidence type="ECO:0000255" key="3">
    <source>
        <dbReference type="PROSITE-ProRule" id="PRU00068"/>
    </source>
</evidence>
<evidence type="ECO:0000256" key="4">
    <source>
        <dbReference type="SAM" id="MobiDB-lite"/>
    </source>
</evidence>
<evidence type="ECO:0000269" key="5">
    <source>
    </source>
</evidence>
<evidence type="ECO:0000269" key="6">
    <source>
    </source>
</evidence>
<evidence type="ECO:0000303" key="7">
    <source>
    </source>
</evidence>
<evidence type="ECO:0000305" key="8"/>
<evidence type="ECO:0000305" key="9">
    <source>
    </source>
</evidence>
<evidence type="ECO:0000305" key="10">
    <source>
    </source>
</evidence>
<name>VM2_BOTCO</name>
<dbReference type="PIR" id="F43019">
    <property type="entry name" value="F43019"/>
</dbReference>
<dbReference type="SMR" id="P31988"/>
<dbReference type="GO" id="GO:0005576">
    <property type="term" value="C:extracellular region"/>
    <property type="evidence" value="ECO:0007669"/>
    <property type="project" value="UniProtKB-SubCell"/>
</dbReference>
<dbReference type="GO" id="GO:0005886">
    <property type="term" value="C:plasma membrane"/>
    <property type="evidence" value="ECO:0007669"/>
    <property type="project" value="TreeGrafter"/>
</dbReference>
<dbReference type="GO" id="GO:0090729">
    <property type="term" value="F:toxin activity"/>
    <property type="evidence" value="ECO:0007669"/>
    <property type="project" value="UniProtKB-KW"/>
</dbReference>
<dbReference type="FunFam" id="4.10.70.10:FF:000005">
    <property type="entry name" value="Zinc metalloproteinase/disintegrin"/>
    <property type="match status" value="1"/>
</dbReference>
<dbReference type="Gene3D" id="4.10.70.10">
    <property type="entry name" value="Disintegrin domain"/>
    <property type="match status" value="1"/>
</dbReference>
<dbReference type="InterPro" id="IPR018358">
    <property type="entry name" value="Disintegrin_CS"/>
</dbReference>
<dbReference type="InterPro" id="IPR001762">
    <property type="entry name" value="Disintegrin_dom"/>
</dbReference>
<dbReference type="InterPro" id="IPR036436">
    <property type="entry name" value="Disintegrin_dom_sf"/>
</dbReference>
<dbReference type="PANTHER" id="PTHR11905">
    <property type="entry name" value="ADAM A DISINTEGRIN AND METALLOPROTEASE DOMAIN"/>
    <property type="match status" value="1"/>
</dbReference>
<dbReference type="PANTHER" id="PTHR11905:SF32">
    <property type="entry name" value="DISINTEGRIN AND METALLOPROTEINASE DOMAIN-CONTAINING PROTEIN 28"/>
    <property type="match status" value="1"/>
</dbReference>
<dbReference type="Pfam" id="PF00200">
    <property type="entry name" value="Disintegrin"/>
    <property type="match status" value="1"/>
</dbReference>
<dbReference type="PRINTS" id="PR00289">
    <property type="entry name" value="DISINTEGRIN"/>
</dbReference>
<dbReference type="SMART" id="SM00050">
    <property type="entry name" value="DISIN"/>
    <property type="match status" value="1"/>
</dbReference>
<dbReference type="SUPFAM" id="SSF57552">
    <property type="entry name" value="Blood coagulation inhibitor (disintegrin)"/>
    <property type="match status" value="1"/>
</dbReference>
<dbReference type="PROSITE" id="PS00427">
    <property type="entry name" value="DISINTEGRIN_1"/>
    <property type="match status" value="1"/>
</dbReference>
<dbReference type="PROSITE" id="PS50214">
    <property type="entry name" value="DISINTEGRIN_2"/>
    <property type="match status" value="1"/>
</dbReference>
<proteinExistence type="evidence at protein level"/>
<protein>
    <recommendedName>
        <fullName evidence="7">Disintegrin cotiarin</fullName>
    </recommendedName>
    <alternativeName>
        <fullName>Platelet aggregation activation inhibitor</fullName>
    </alternativeName>
</protein>
<organism>
    <name type="scientific">Bothrops cotiara</name>
    <name type="common">Cotiara</name>
    <name type="synonym">Rhinocerophis cotiara</name>
    <dbReference type="NCBI Taxonomy" id="8727"/>
    <lineage>
        <taxon>Eukaryota</taxon>
        <taxon>Metazoa</taxon>
        <taxon>Chordata</taxon>
        <taxon>Craniata</taxon>
        <taxon>Vertebrata</taxon>
        <taxon>Euteleostomi</taxon>
        <taxon>Lepidosauria</taxon>
        <taxon>Squamata</taxon>
        <taxon>Bifurcata</taxon>
        <taxon>Unidentata</taxon>
        <taxon>Episquamata</taxon>
        <taxon>Toxicofera</taxon>
        <taxon>Serpentes</taxon>
        <taxon>Colubroidea</taxon>
        <taxon>Viperidae</taxon>
        <taxon>Crotalinae</taxon>
        <taxon>Bothrops</taxon>
    </lineage>
</organism>
<keyword id="KW-1217">Cell adhesion impairing toxin</keyword>
<keyword id="KW-0903">Direct protein sequencing</keyword>
<keyword id="KW-1015">Disulfide bond</keyword>
<keyword id="KW-1199">Hemostasis impairing toxin</keyword>
<keyword id="KW-1201">Platelet aggregation inhibiting toxin</keyword>
<keyword id="KW-0964">Secreted</keyword>
<keyword id="KW-0800">Toxin</keyword>
<reference key="1">
    <citation type="journal article" date="1993" name="J. Biol. Chem.">
        <title>Characterization of the integrin specificities of disintegrins isolated from American pit viper venoms.</title>
        <authorList>
            <person name="Scarborough R.M."/>
            <person name="Rose J.W."/>
            <person name="Naughton M.A."/>
            <person name="Phillips D.R."/>
            <person name="Nannizzi L."/>
            <person name="Arfsten A."/>
            <person name="Campbell A.M."/>
            <person name="Charo I.F."/>
        </authorList>
    </citation>
    <scope>PROTEIN SEQUENCE</scope>
    <scope>SUBCELLULAR LOCATION</scope>
    <source>
        <tissue>Venom</tissue>
    </source>
</reference>
<reference key="2">
    <citation type="journal article" date="2008" name="J. Proteomics">
        <title>Snake venomics of the Brazilian pitvipers Bothrops cotiara and Bothrops fonsecai. Identification of taxonomy markers.</title>
        <authorList>
            <person name="Tashima A.K."/>
            <person name="Sanz L."/>
            <person name="Camargo A.C."/>
            <person name="Serrano S.M."/>
            <person name="Calvete J.J."/>
        </authorList>
    </citation>
    <scope>PROTEIN SEQUENCE OF 1-20</scope>
    <scope>SUBCELLULAR LOCATION</scope>
    <source>
        <tissue>Venom</tissue>
    </source>
</reference>
<sequence length="72" mass="7710">EAGEECDCGAPENPCCDAATCKLRPGAQCAEGLCCDQCRFKGAGKICRRARGDNPDDRCTGQSADCPRNRFH</sequence>
<feature type="chain" id="PRO_0000101786" description="Disintegrin cotiarin" evidence="6">
    <location>
        <begin position="1"/>
        <end position="72"/>
    </location>
</feature>
<feature type="domain" description="Disintegrin" evidence="3">
    <location>
        <begin position="1"/>
        <end position="72"/>
    </location>
</feature>
<feature type="region of interest" description="Disordered" evidence="4">
    <location>
        <begin position="51"/>
        <end position="72"/>
    </location>
</feature>
<feature type="short sequence motif" description="Cell attachment site">
    <location>
        <begin position="51"/>
        <end position="53"/>
    </location>
</feature>
<feature type="disulfide bond" evidence="2">
    <location>
        <begin position="6"/>
        <end position="21"/>
    </location>
</feature>
<feature type="disulfide bond" evidence="2">
    <location>
        <begin position="8"/>
        <end position="16"/>
    </location>
</feature>
<feature type="disulfide bond" evidence="2">
    <location>
        <begin position="15"/>
        <end position="38"/>
    </location>
</feature>
<feature type="disulfide bond" evidence="2">
    <location>
        <begin position="29"/>
        <end position="35"/>
    </location>
</feature>
<feature type="disulfide bond" evidence="2">
    <location>
        <begin position="34"/>
        <end position="59"/>
    </location>
</feature>
<feature type="disulfide bond" evidence="2 3">
    <location>
        <begin position="47"/>
        <end position="66"/>
    </location>
</feature>
<feature type="sequence conflict" description="In Ref. 2; AA sequence." evidence="8" ref="2">
    <original>A</original>
    <variation>T</variation>
    <location>
        <position position="10"/>
    </location>
</feature>
<comment type="function">
    <text>Inhibits fibrinogen interaction with platelets. Acts by binding to alpha-IIb/beta-3 (ITGA2B/ITGB3) on the platelet surface and inhibits aggregation induced by ADP, thrombin, platelet-activating factor and collagen.</text>
</comment>
<comment type="subunit">
    <text evidence="1">Monomer.</text>
</comment>
<comment type="subcellular location">
    <subcellularLocation>
        <location evidence="5 6">Secreted</location>
    </subcellularLocation>
</comment>
<comment type="tissue specificity">
    <text evidence="9 10">Expressed by the venom gland.</text>
</comment>
<comment type="miscellaneous">
    <text>The disintegrin belongs to the medium disintegrin subfamily.</text>
</comment>
<comment type="similarity">
    <text evidence="8">Belongs to the venom metalloproteinase (M12B) family. P-II subfamily. P-IIa sub-subfamily.</text>
</comment>
<accession>P31988</accession>